<proteinExistence type="evidence at protein level"/>
<gene>
    <name type="primary">env</name>
</gene>
<organismHost>
    <name type="scientific">Mus musculus</name>
    <name type="common">Mouse</name>
    <dbReference type="NCBI Taxonomy" id="10090"/>
</organismHost>
<evidence type="ECO:0000250" key="1"/>
<evidence type="ECO:0000255" key="2"/>
<evidence type="ECO:0000256" key="3">
    <source>
        <dbReference type="SAM" id="MobiDB-lite"/>
    </source>
</evidence>
<evidence type="ECO:0000269" key="4">
    <source>
    </source>
</evidence>
<evidence type="ECO:0000269" key="5">
    <source>
    </source>
</evidence>
<evidence type="ECO:0000269" key="6">
    <source>
    </source>
</evidence>
<evidence type="ECO:0000305" key="7"/>
<evidence type="ECO:0007829" key="8">
    <source>
        <dbReference type="PDB" id="1MOF"/>
    </source>
</evidence>
<feature type="signal peptide" evidence="2">
    <location>
        <begin position="1"/>
        <end position="33"/>
    </location>
</feature>
<feature type="chain" id="PRO_0000239588" description="Envelope glycoprotein">
    <location>
        <begin position="34"/>
        <end position="665"/>
    </location>
</feature>
<feature type="chain" id="PRO_0000040765" description="Surface protein" evidence="1">
    <location>
        <begin position="34"/>
        <end position="469"/>
    </location>
</feature>
<feature type="chain" id="PRO_0000040766" description="Transmembrane protein">
    <location>
        <begin position="470"/>
        <end position="649"/>
    </location>
</feature>
<feature type="peptide" id="PRO_0000040767" description="R-peptide">
    <location>
        <begin position="650"/>
        <end position="665"/>
    </location>
</feature>
<feature type="topological domain" description="Extracellular" evidence="2">
    <location>
        <begin position="34"/>
        <end position="610"/>
    </location>
</feature>
<feature type="transmembrane region" description="Helical" evidence="2">
    <location>
        <begin position="611"/>
        <end position="631"/>
    </location>
</feature>
<feature type="topological domain" description="Cytoplasmic" evidence="2">
    <location>
        <begin position="632"/>
        <end position="665"/>
    </location>
</feature>
<feature type="region of interest" description="Receptor-binding domain (RBD)" evidence="2">
    <location>
        <begin position="34"/>
        <end position="267"/>
    </location>
</feature>
<feature type="region of interest" description="Disordered" evidence="3">
    <location>
        <begin position="268"/>
        <end position="309"/>
    </location>
</feature>
<feature type="region of interest" description="Fusion peptide" evidence="1">
    <location>
        <begin position="472"/>
        <end position="492"/>
    </location>
</feature>
<feature type="region of interest" description="Immunosuppression" evidence="1">
    <location>
        <begin position="538"/>
        <end position="554"/>
    </location>
</feature>
<feature type="coiled-coil region" evidence="2">
    <location>
        <begin position="500"/>
        <end position="537"/>
    </location>
</feature>
<feature type="short sequence motif" description="CXXC">
    <location>
        <begin position="336"/>
        <end position="339"/>
    </location>
</feature>
<feature type="short sequence motif" description="CX6CC">
    <location>
        <begin position="555"/>
        <end position="563"/>
    </location>
</feature>
<feature type="short sequence motif" description="YXXL motif; contains endocytosis signal" evidence="1">
    <location>
        <begin position="655"/>
        <end position="658"/>
    </location>
</feature>
<feature type="compositionally biased region" description="Low complexity" evidence="3">
    <location>
        <begin position="281"/>
        <end position="299"/>
    </location>
</feature>
<feature type="binding site" evidence="1">
    <location>
        <position position="117"/>
    </location>
    <ligand>
        <name>Zn(2+)</name>
        <dbReference type="ChEBI" id="CHEBI:29105"/>
    </ligand>
</feature>
<feature type="site" description="Cleavage; by host">
    <location>
        <begin position="469"/>
        <end position="470"/>
    </location>
</feature>
<feature type="site" description="Cleavage; by viral protease p14" evidence="2">
    <location>
        <begin position="649"/>
        <end position="650"/>
    </location>
</feature>
<feature type="lipid moiety-binding region" description="S-palmitoyl cysteine; by host" evidence="1">
    <location>
        <position position="630"/>
    </location>
</feature>
<feature type="glycosylation site" description="N-linked (GlcNAc...) asparagine; by host" evidence="1">
    <location>
        <position position="45"/>
    </location>
</feature>
<feature type="glycosylation site" description="N-linked (GlcNAc...) asparagine; by host" evidence="1">
    <location>
        <position position="199"/>
    </location>
</feature>
<feature type="glycosylation site" description="N-linked (GlcNAc...) asparagine; by host" evidence="1">
    <location>
        <position position="326"/>
    </location>
</feature>
<feature type="glycosylation site" description="N-linked (GlcNAc...) asparagine; by host" evidence="2">
    <location>
        <position position="358"/>
    </location>
</feature>
<feature type="glycosylation site" description="N-linked (GlcNAc...) asparagine; by host" evidence="2">
    <location>
        <position position="365"/>
    </location>
</feature>
<feature type="glycosylation site" description="N-linked (GlcNAc...) asparagine; by host" evidence="2">
    <location>
        <position position="398"/>
    </location>
</feature>
<feature type="glycosylation site" description="N-linked (GlcNAc...) asparagine; by host" evidence="2">
    <location>
        <position position="434"/>
    </location>
</feature>
<feature type="disulfide bond" evidence="1">
    <location>
        <begin position="79"/>
        <end position="129"/>
    </location>
</feature>
<feature type="disulfide bond" evidence="1">
    <location>
        <begin position="105"/>
        <end position="118"/>
    </location>
</feature>
<feature type="disulfide bond" evidence="1">
    <location>
        <begin position="106"/>
        <end position="114"/>
    </location>
</feature>
<feature type="disulfide bond" evidence="1">
    <location>
        <begin position="152"/>
        <end position="172"/>
    </location>
</feature>
<feature type="disulfide bond" evidence="1">
    <location>
        <begin position="164"/>
        <end position="177"/>
    </location>
</feature>
<feature type="disulfide bond" evidence="1">
    <location>
        <begin position="209"/>
        <end position="215"/>
    </location>
</feature>
<feature type="disulfide bond" description="Interchain (between SU and TM chains, or C-339 with C-563); in linked form">
    <location>
        <begin position="336"/>
        <end position="563"/>
    </location>
</feature>
<feature type="disulfide bond">
    <location>
        <begin position="336"/>
        <end position="339"/>
    </location>
</feature>
<feature type="disulfide bond" evidence="1">
    <location>
        <begin position="366"/>
        <end position="420"/>
    </location>
</feature>
<feature type="disulfide bond" evidence="1">
    <location>
        <begin position="385"/>
        <end position="397"/>
    </location>
</feature>
<feature type="disulfide bond" evidence="1">
    <location>
        <begin position="427"/>
        <end position="440"/>
    </location>
</feature>
<feature type="disulfide bond" evidence="1">
    <location>
        <begin position="555"/>
        <end position="562"/>
    </location>
</feature>
<feature type="sequence conflict" description="In Ref. 4." evidence="7" ref="4">
    <original>Y</original>
    <variation>F</variation>
    <location>
        <position position="655"/>
    </location>
</feature>
<feature type="sequence conflict" description="In Ref. 4 and 5." evidence="7" ref="4 5">
    <original>Y</original>
    <variation>C</variation>
    <location>
        <position position="663"/>
    </location>
</feature>
<feature type="helix" evidence="8">
    <location>
        <begin position="516"/>
        <end position="547"/>
    </location>
</feature>
<feature type="helix" evidence="8">
    <location>
        <begin position="549"/>
        <end position="551"/>
    </location>
</feature>
<feature type="helix" evidence="8">
    <location>
        <begin position="554"/>
        <end position="558"/>
    </location>
</feature>
<sequence>MARSTLSKPLKNKVNPRGPLIPLILLMLRGVSTASPGSSPHQVYNITWEVTNGDRETVWATSGNHPLWTWWPDLTPDLCMLAHHGPSYWGLEYQSPFSSPPGPPCCSGGSSPGCSRDCEEPLTSLTPRCNTAWNRLKLDQTTHKSNEGFYVCPGPHRPRESKSCGGPDSFYCAYWGCETTGRAYWKPSSSWDFITVNNNLTSDQAVQVCKDNKWCNPLVIRFTDAGRRVTSWTTGHYWGLRLYVSGQDPGLTFGIRLRYQNLGPRVPIGPNPVLADQQPLSKPKPVKSPSVTKPPSGTPLSPTQLPPAGTENRLLNLVDGAYQALNLTSPDKTQECWLCLVAGPPYYEGVAVLGTYSNHTSAPANCSVASQHKLTLSEVTGQGLCIGAVPKTHQALCNTTQTSSRGSYYLVAPTGTMWACSTGLTPCISTTILNLTTDYCVLVELWPRVTYHSPSYVYGLFERSNRHKREPVSLTLALLLGGLTMGGIAAGIGTGTTALMATQQFQQLQAAVQDDLREVEKSISNLEKSLTSLSEVVLQNRRGLDLLFLKEGGLCAALKEECCFYADHTGLVRDSMAKLRERLNQRQKLFESTQGWFEGLFNRSPWFTTLISTIMGPLIVLLMILLFGPCILNRLVQFVKDRISVVQALVLTQQYHQLKPIEYEP</sequence>
<organism>
    <name type="scientific">Moloney murine leukemia virus (isolate Shinnick)</name>
    <name type="common">MoMLV</name>
    <dbReference type="NCBI Taxonomy" id="928306"/>
    <lineage>
        <taxon>Viruses</taxon>
        <taxon>Riboviria</taxon>
        <taxon>Pararnavirae</taxon>
        <taxon>Artverviricota</taxon>
        <taxon>Revtraviricetes</taxon>
        <taxon>Ortervirales</taxon>
        <taxon>Retroviridae</taxon>
        <taxon>Orthoretrovirinae</taxon>
        <taxon>Gammaretrovirus</taxon>
        <taxon>Murine leukemia virus</taxon>
    </lineage>
</organism>
<keyword id="KW-0002">3D-structure</keyword>
<keyword id="KW-0165">Cleavage on pair of basic residues</keyword>
<keyword id="KW-0175">Coiled coil</keyword>
<keyword id="KW-0903">Direct protein sequencing</keyword>
<keyword id="KW-1015">Disulfide bond</keyword>
<keyword id="KW-1169">Fusion of virus membrane with host cell membrane</keyword>
<keyword id="KW-1168">Fusion of virus membrane with host membrane</keyword>
<keyword id="KW-0325">Glycoprotein</keyword>
<keyword id="KW-1032">Host cell membrane</keyword>
<keyword id="KW-1043">Host membrane</keyword>
<keyword id="KW-0945">Host-virus interaction</keyword>
<keyword id="KW-0449">Lipoprotein</keyword>
<keyword id="KW-0472">Membrane</keyword>
<keyword id="KW-0479">Metal-binding</keyword>
<keyword id="KW-0564">Palmitate</keyword>
<keyword id="KW-1185">Reference proteome</keyword>
<keyword id="KW-0732">Signal</keyword>
<keyword id="KW-0812">Transmembrane</keyword>
<keyword id="KW-1133">Transmembrane helix</keyword>
<keyword id="KW-1161">Viral attachment to host cell</keyword>
<keyword id="KW-0261">Viral envelope protein</keyword>
<keyword id="KW-1162">Viral penetration into host cytoplasm</keyword>
<keyword id="KW-0946">Virion</keyword>
<keyword id="KW-1160">Virus entry into host cell</keyword>
<keyword id="KW-0862">Zinc</keyword>
<reference key="1">
    <citation type="journal article" date="1981" name="Nature">
        <title>Nucleotide sequence of Moloney murine leukaemia virus.</title>
        <authorList>
            <person name="Shinnick T.M."/>
            <person name="Lerner R.A."/>
            <person name="Sutcliffe J.G."/>
        </authorList>
    </citation>
    <scope>NUCLEOTIDE SEQUENCE [GENOMIC RNA]</scope>
    <source>
        <strain>Clone pMLV-1</strain>
    </source>
</reference>
<reference key="2">
    <citation type="submission" date="1997-11" db="EMBL/GenBank/DDBJ databases">
        <authorList>
            <person name="Chappey C."/>
        </authorList>
    </citation>
    <scope>NUCLEOTIDE SEQUENCE [GENOMIC RNA]</scope>
</reference>
<reference key="3">
    <citation type="journal article" date="1980" name="Nature">
        <title>Chemical synthesis of a polypeptide predicted from nucleotide sequence allows detection of a new retroviral gene product.</title>
        <authorList>
            <person name="Sutcliffe J.G."/>
            <person name="Shinnick T.M."/>
            <person name="Green N."/>
            <person name="Liu F.-T."/>
            <person name="Niman H.L."/>
            <person name="Lerner R.A."/>
        </authorList>
    </citation>
    <scope>NUCLEOTIDE SEQUENCE [GENOMIC RNA] OF 496-665</scope>
</reference>
<reference key="4">
    <citation type="journal article" date="1980" name="Proc. Natl. Acad. Sci. U.S.A.">
        <title>Nucleotide sequence of Moloney leukemia virus: 3' end reveals details of replications, analogy to bacterial transposons, and an unexpected gene.</title>
        <authorList>
            <person name="Sutcliffe J.G."/>
            <person name="Shinnick T.M."/>
            <person name="Verma I.M."/>
            <person name="Lerner R.A."/>
        </authorList>
    </citation>
    <scope>NUCLEOTIDE SEQUENCE [GENOMIC RNA] OF 484-665</scope>
    <source>
        <strain>Clone pMLV-201</strain>
    </source>
</reference>
<reference key="5">
    <citation type="journal article" date="1981" name="Proc. Natl. Acad. Sci. U.S.A.">
        <title>Sequence-specific antibodies show that maturation of Moloney leukemia virus envelope polyprotein involves removal of a COOH-terminal peptide.</title>
        <authorList>
            <person name="Green N."/>
            <person name="Shinnick T.M."/>
            <person name="Witte O."/>
            <person name="Ponticelli A."/>
            <person name="Sutcliffe J.G."/>
            <person name="Lerner R.A."/>
        </authorList>
    </citation>
    <scope>PROTEIN SEQUENCE OF 470-489 AND 598-665</scope>
</reference>
<reference key="6">
    <citation type="journal article" date="1985" name="Science">
        <title>Inhibition of lymphocyte proliferation by a synthetic peptide homologous to retroviral envelope proteins.</title>
        <authorList>
            <person name="Cianciolo G.J."/>
            <person name="Copeland T.D."/>
            <person name="Oroszlan S."/>
            <person name="Snyderman R."/>
        </authorList>
    </citation>
    <scope>IMMUNOSUPPRESSIVE REGION</scope>
</reference>
<reference key="7">
    <citation type="journal article" date="1999" name="J. Virol.">
        <title>Palmitoylation of the intracytoplasmic R peptide of the transmembrane envelope protein in Moloney murine leukemia virus.</title>
        <authorList>
            <person name="Olsen K.E."/>
            <person name="Andersen K.B."/>
        </authorList>
    </citation>
    <scope>SUBCELLULAR LOCATION OF THE R-PEPTIDE</scope>
    <scope>PALMITOYLATION OF THE R-PEPTIDE</scope>
</reference>
<reference key="8">
    <citation type="journal article" date="2003" name="J. Gen. Virol.">
        <title>Mutational analysis of the R peptide cleavage site of Moloney murine leukaemia virus envelope protein.</title>
        <authorList>
            <person name="Kubo Y."/>
            <person name="Amanuma H."/>
        </authorList>
    </citation>
    <scope>CLEAVAGE OF THE R-PEPTIDE</scope>
</reference>
<reference key="9">
    <citation type="journal article" date="2004" name="EMBO J.">
        <title>Isomerization of the intersubunit disulphide-bond in Env controls retrovirus fusion.</title>
        <authorList>
            <person name="Wallin M."/>
            <person name="Ekstroem M."/>
            <person name="Garoff H."/>
        </authorList>
    </citation>
    <scope>INTERCHAIN DISULFIDE BOND</scope>
</reference>
<reference key="10">
    <citation type="journal article" date="2008" name="EMBO J.">
        <title>Turning of the receptor-binding domains opens up the murine leukaemia virus Env for membrane fusion.</title>
        <authorList>
            <person name="Wu S.-R."/>
            <person name="Sjoeberg M."/>
            <person name="Wallin M."/>
            <person name="Lindqvist B."/>
            <person name="Ekstroem M."/>
            <person name="Hebert H."/>
            <person name="Koeck P.J."/>
            <person name="Garoff H."/>
        </authorList>
    </citation>
    <scope>FUNCTION</scope>
</reference>
<reference key="11">
    <citation type="journal article" date="2008" name="J. Virol.">
        <title>Stabilization of TM trimer interactions during activation of moloney murine leukemia virus Env.</title>
        <authorList>
            <person name="Sjoberg M."/>
            <person name="Lindqvist B."/>
            <person name="Garoff H."/>
        </authorList>
    </citation>
    <scope>SUBUNIT</scope>
</reference>
<reference key="12">
    <citation type="journal article" date="1996" name="Nat. Struct. Biol.">
        <title>Retrovirus envelope domain at 1.7-A resolution.</title>
        <authorList>
            <person name="Fass D."/>
            <person name="Harrison S.C."/>
            <person name="Kim P.S."/>
        </authorList>
    </citation>
    <scope>X-RAY CRYSTALLOGRAPHY (1.7 ANGSTROMS) OF 514-567</scope>
</reference>
<protein>
    <recommendedName>
        <fullName>Envelope glycoprotein</fullName>
        <shortName>Pr80env</shortName>
    </recommendedName>
    <alternativeName>
        <fullName>Env polyprotein</fullName>
    </alternativeName>
    <component>
        <recommendedName>
            <fullName>Surface protein</fullName>
            <shortName>SU</shortName>
        </recommendedName>
        <alternativeName>
            <fullName>Glycoprotein 70</fullName>
            <shortName>gp70</shortName>
        </alternativeName>
    </component>
    <component>
        <recommendedName>
            <fullName>Transmembrane protein</fullName>
            <shortName>TM</shortName>
        </recommendedName>
        <alternativeName>
            <fullName>Envelope protein p15E</fullName>
        </alternativeName>
    </component>
    <component>
        <recommendedName>
            <fullName>R-peptide</fullName>
        </recommendedName>
        <alternativeName>
            <fullName>p2E</fullName>
        </alternativeName>
    </component>
</protein>
<name>ENV_MLVMS</name>
<dbReference type="EMBL" id="J02255">
    <property type="protein sequence ID" value="AAB59943.1"/>
    <property type="molecule type" value="Genomic_RNA"/>
</dbReference>
<dbReference type="EMBL" id="AF033811">
    <property type="protein sequence ID" value="AAC82567.1"/>
    <property type="molecule type" value="Genomic_RNA"/>
</dbReference>
<dbReference type="PIR" id="A93265">
    <property type="entry name" value="VCVWEM"/>
</dbReference>
<dbReference type="RefSeq" id="NP_057935.1">
    <property type="nucleotide sequence ID" value="NC_001501.1"/>
</dbReference>
<dbReference type="PDB" id="1MOF">
    <property type="method" value="X-ray"/>
    <property type="resolution" value="1.70 A"/>
    <property type="chains" value="A=514-567"/>
</dbReference>
<dbReference type="PDBsum" id="1MOF"/>
<dbReference type="SMR" id="P03385"/>
<dbReference type="MINT" id="P03385"/>
<dbReference type="GlyCosmos" id="P03385">
    <property type="glycosylation" value="7 sites, No reported glycans"/>
</dbReference>
<dbReference type="SwissPalm" id="P03385"/>
<dbReference type="KEGG" id="vg:34950657"/>
<dbReference type="EvolutionaryTrace" id="P03385"/>
<dbReference type="Proteomes" id="UP000006625">
    <property type="component" value="Segment"/>
</dbReference>
<dbReference type="Proteomes" id="UP000180702">
    <property type="component" value="Genome"/>
</dbReference>
<dbReference type="GO" id="GO:0020002">
    <property type="term" value="C:host cell plasma membrane"/>
    <property type="evidence" value="ECO:0007669"/>
    <property type="project" value="UniProtKB-SubCell"/>
</dbReference>
<dbReference type="GO" id="GO:0016020">
    <property type="term" value="C:membrane"/>
    <property type="evidence" value="ECO:0007669"/>
    <property type="project" value="UniProtKB-KW"/>
</dbReference>
<dbReference type="GO" id="GO:0019031">
    <property type="term" value="C:viral envelope"/>
    <property type="evidence" value="ECO:0007669"/>
    <property type="project" value="UniProtKB-KW"/>
</dbReference>
<dbReference type="GO" id="GO:0055036">
    <property type="term" value="C:virion membrane"/>
    <property type="evidence" value="ECO:0007669"/>
    <property type="project" value="UniProtKB-SubCell"/>
</dbReference>
<dbReference type="GO" id="GO:0042802">
    <property type="term" value="F:identical protein binding"/>
    <property type="evidence" value="ECO:0000353"/>
    <property type="project" value="IntAct"/>
</dbReference>
<dbReference type="GO" id="GO:0046872">
    <property type="term" value="F:metal ion binding"/>
    <property type="evidence" value="ECO:0007669"/>
    <property type="project" value="UniProtKB-KW"/>
</dbReference>
<dbReference type="GO" id="GO:0019064">
    <property type="term" value="P:fusion of virus membrane with host plasma membrane"/>
    <property type="evidence" value="ECO:0007669"/>
    <property type="project" value="UniProtKB-KW"/>
</dbReference>
<dbReference type="GO" id="GO:0046718">
    <property type="term" value="P:symbiont entry into host cell"/>
    <property type="evidence" value="ECO:0007669"/>
    <property type="project" value="UniProtKB-KW"/>
</dbReference>
<dbReference type="GO" id="GO:0019062">
    <property type="term" value="P:virion attachment to host cell"/>
    <property type="evidence" value="ECO:0007669"/>
    <property type="project" value="UniProtKB-KW"/>
</dbReference>
<dbReference type="CDD" id="cd09851">
    <property type="entry name" value="HTLV-1-like_HR1-HR2"/>
    <property type="match status" value="1"/>
</dbReference>
<dbReference type="FunFam" id="1.10.287.210:FF:000005">
    <property type="entry name" value="Envelope glycoprotein"/>
    <property type="match status" value="1"/>
</dbReference>
<dbReference type="Gene3D" id="1.10.287.210">
    <property type="match status" value="1"/>
</dbReference>
<dbReference type="Gene3D" id="3.90.310.10">
    <property type="entry name" value="ENV polyprotein, receptor-binding domain"/>
    <property type="match status" value="1"/>
</dbReference>
<dbReference type="InterPro" id="IPR008981">
    <property type="entry name" value="FMuLV_rcpt-bd"/>
</dbReference>
<dbReference type="InterPro" id="IPR018154">
    <property type="entry name" value="TLV/ENV_coat_polyprotein"/>
</dbReference>
<dbReference type="PANTHER" id="PTHR10424:SF72">
    <property type="entry name" value="BC035947 PROTEIN-RELATED"/>
    <property type="match status" value="1"/>
</dbReference>
<dbReference type="PANTHER" id="PTHR10424">
    <property type="entry name" value="VIRAL ENVELOPE PROTEIN"/>
    <property type="match status" value="1"/>
</dbReference>
<dbReference type="Pfam" id="PF00429">
    <property type="entry name" value="TLV_coat"/>
    <property type="match status" value="1"/>
</dbReference>
<dbReference type="SUPFAM" id="SSF49830">
    <property type="entry name" value="ENV polyprotein, receptor-binding domain"/>
    <property type="match status" value="1"/>
</dbReference>
<dbReference type="SUPFAM" id="SSF58069">
    <property type="entry name" value="Virus ectodomain"/>
    <property type="match status" value="1"/>
</dbReference>
<accession>P03385</accession>
<accession>Q77YG8</accession>
<comment type="function">
    <text evidence="6">The surface protein (SU) attaches the virus to the host cell by binding to its receptor. Interaction with HECT ubiquitin ligases activates a thiol in a CXXC motif of the C-terminal domain, where the other Cys residue participates in the formation of the intersubunit disulfide. The activated thiol will attack the disulfide and cause its isomerization into a disulfide isomer within the motif. This leads to SU displacement and TM refolding, and is thought to activate its fusogenic potential by unmasking its fusion peptide. Fusion occurs at the host cell plasma membrane.</text>
</comment>
<comment type="function">
    <text evidence="1">The transmembrane protein (TM) acts as a class I viral fusion protein. Under the current model, the protein has at least 3 conformational states: pre-fusion native state, pre-hairpin intermediate state, and post-fusion hairpin state. During viral and target cell membrane fusion, the coiled coil regions (heptad repeats) assume a trimer-of-hairpins structure, positioning the fusion peptide in close proximity to the C-terminal region of the ectodomain. The formation of this structure appears to drive apposition and subsequent fusion of viral and target cell membranes. Membranes fusion leads to delivery of the nucleocapsid into the cytoplasm (By similarity).</text>
</comment>
<comment type="subunit">
    <text evidence="5">The mature envelope protein (Env) consists of a trimer of SU-TM heterodimers attached by a labile interchain disulfide bond. The activated Env consists of SU monomers and TM trimers.</text>
</comment>
<comment type="interaction">
    <interactant intactId="EBI-8074066">
        <id>P03385</id>
    </interactant>
    <interactant intactId="EBI-8074066">
        <id>P03385</id>
        <label>env</label>
    </interactant>
    <organismsDiffer>false</organismsDiffer>
    <experiments>2</experiments>
</comment>
<comment type="subcellular location">
    <molecule>Transmembrane protein</molecule>
    <subcellularLocation>
        <location evidence="1">Virion membrane</location>
        <topology evidence="1">Single-pass type I membrane protein</topology>
    </subcellularLocation>
    <subcellularLocation>
        <location evidence="1">Host cell membrane</location>
        <topology evidence="1">Single-pass type I membrane protein</topology>
    </subcellularLocation>
</comment>
<comment type="subcellular location">
    <molecule>Surface protein</molecule>
    <subcellularLocation>
        <location>Virion membrane</location>
        <topology>Peripheral membrane protein</topology>
    </subcellularLocation>
    <subcellularLocation>
        <location evidence="1">Host cell membrane</location>
        <topology evidence="1">Peripheral membrane protein</topology>
    </subcellularLocation>
    <text evidence="1">The surface protein is not anchored to the viral envelope, but associates with the virion surface through its binding to TM. Both proteins are thought to be concentrated at the site of budding and incorporated into the virions possibly by contacts between the cytoplasmic tail of Env and the N-terminus of Gag (By similarity).</text>
</comment>
<comment type="subcellular location">
    <molecule>R-peptide</molecule>
    <subcellularLocation>
        <location evidence="4">Host cell membrane</location>
        <topology evidence="4">Peripheral membrane protein</topology>
    </subcellularLocation>
    <text>The R-peptide is membrane-associated through its palmitate.</text>
</comment>
<comment type="domain">
    <text evidence="1">The 17 amino acids long immunosuppressive region is present in many retroviral envelope proteins. Synthetic peptides derived from this relatively conserved sequence inhibit immune function in vitro and in vivo (By similarity).</text>
</comment>
<comment type="domain">
    <text>The YXXL motif is involved in determining the exact site of viral release at the surface of infected mononuclear cells and promotes endocytosis.</text>
</comment>
<comment type="PTM">
    <text evidence="1">Specific enzymatic cleavages in vivo yield mature proteins. Envelope glycoproteins are synthesized as an inactive precursor that is N-glycosylated and processed likely by host cell furin or by a furin-like protease in the Golgi to yield the mature SU and TM proteins. The cleavage site between SU and TM requires the minimal sequence [KR]-X-[KR]-R. The R-peptide is released from the C-terminus of the cytoplasmic tail of the TM protein upon particle formation as a result of proteolytic cleavage by the viral protease. Cleavage of this peptide is required for TM to become fusogenic (By similarity).</text>
</comment>
<comment type="PTM">
    <text evidence="1">The CXXC motif is highly conserved across a broad range of retroviral envelope proteins. It is thought to participate in the formation of a labile disulfide bond possibly with the CX6CC motif present in the transmembrane protein. Isomerization of the intersubunit disulfide bond to an SU intrachain disulfide bond is thought to occur upon receptor recognition in order to allow membrane fusion (By similarity).</text>
</comment>
<comment type="PTM">
    <text evidence="1">The transmembrane protein is palmitoylated.</text>
</comment>
<comment type="PTM">
    <text evidence="4">The R-peptide is palmitoylated.</text>
</comment>